<proteinExistence type="evidence at protein level"/>
<evidence type="ECO:0000255" key="1">
    <source>
        <dbReference type="HAMAP-Rule" id="MF_04026"/>
    </source>
</evidence>
<evidence type="ECO:0000256" key="2">
    <source>
        <dbReference type="SAM" id="MobiDB-lite"/>
    </source>
</evidence>
<evidence type="ECO:0000269" key="3">
    <source>
    </source>
</evidence>
<evidence type="ECO:0000269" key="4">
    <source>
    </source>
</evidence>
<evidence type="ECO:0000269" key="5">
    <source>
    </source>
</evidence>
<evidence type="ECO:0000269" key="6">
    <source>
    </source>
</evidence>
<evidence type="ECO:0000303" key="7">
    <source>
    </source>
</evidence>
<evidence type="ECO:0000305" key="8"/>
<sequence>MASRPAASSPVEARAPVGGQEAGGPSAATQGEAAGAPLAHGHHVYCQRVNGVMVLSDKTPGSASYRISDNNFVQCGSNCTMIIDGDVVRGRPQDPGAAASPAPFVAVTNIGAGSDGGTAVVAFGGTPRRSAGTSTGTQTADVPTEALGGPPPPPRFTLGGGCCSCRDTRRRSAVFGGEGDPVGPAEFVSDDRSSDSDSDDSEDTDSETLSHASSDVSGGATYDDALDSDSSSDDSLQIDGPVCRPWSNDTAPLDVCPGTPGPGADAGGPSAVDPHAPTPEAGAGLAADPAVARDDAEGLSDPRPRLGTGTAYPVPLELTPENAEAVARFLGDAVNREPALMLEYFCRCAREETKRVPPRTFGSPPRLTEDDFGLLNYALVEMQRLCLDVPPVPPNAYMPYYLREYVTRLVNGFKPLVSRSARLYRILGVLVHLRIRTREASFEEWLRSKEVALDFGLTERLREHEAQLVILAQALDHYDCLIHSTPHTLVERGLQSALKYEEFYLKRFGGHYMESVFQMYTRIAGFLACRATRGMRHIALGREGSWWEMFKFFFHRLYDHQIVPSTPAMLNLGTRNYYTSSCYLVNPQATTNKATLRAITSNVSAILARNGGIGLCVQAFNDSGPGTASVMPALKVLDSLVAAHNKESARPTGACVYLEPWHTDVRAVLRMKGVLAGEEAQRCDNIFSALWMPDLFFKRLIRHLDGEKNVTWTLFDRDTSMSLADFHGEEFEKLYQHLEVMGFGEQIPIQELAYGIVRSAATTGSPFVMFKDAVNRHYIYDTQGAAIAGSNLCTEIVHPASKRSSGVCNLGSVNLARCVSRQTFDFGRLRDAVQACVLMVNIMIDSTLQPTPQCTRGNDNLRSMGIGMQGLHTACLKLGLDLESAEFQDLNKHIAEVMLLSAMKTSNALCVRGARPFNHFKRSMYRAGRFHWERFPDARPRYEGEWEMLRQSMMKHGLRNSQFVALMPTAASAQISDVSEGFAPLFTNLFSKVTRDGETLRPNTLLLKELERTFSGKRLLEVMDSLDAKQWSVAQALPCLEPTHPLRRFKTAFDYDQKLLIDLCADRAPYVDHSQSMTLYVTEKADGTLPASTLVRLLVHAYKRGLKTGMYYCKVRKATNSGVFGGDDNIVCMSCAL</sequence>
<dbReference type="EC" id="1.17.4.1" evidence="1"/>
<dbReference type="EMBL" id="X14112">
    <property type="protein sequence ID" value="CAA32314.1"/>
    <property type="molecule type" value="Genomic_DNA"/>
</dbReference>
<dbReference type="EMBL" id="M18410">
    <property type="protein sequence ID" value="AAA45805.1"/>
    <property type="molecule type" value="Genomic_DNA"/>
</dbReference>
<dbReference type="EMBL" id="DQ889502">
    <property type="protein sequence ID" value="ABI63501.1"/>
    <property type="molecule type" value="Genomic_DNA"/>
</dbReference>
<dbReference type="EMBL" id="FJ593289">
    <property type="protein sequence ID" value="ACM62262.1"/>
    <property type="molecule type" value="Genomic_DNA"/>
</dbReference>
<dbReference type="PIR" id="A26536">
    <property type="entry name" value="WMBEB1"/>
</dbReference>
<dbReference type="RefSeq" id="YP_009137114.1">
    <property type="nucleotide sequence ID" value="NC_001806.2"/>
</dbReference>
<dbReference type="SMR" id="P08543"/>
<dbReference type="BioGRID" id="971405">
    <property type="interactions" value="4"/>
</dbReference>
<dbReference type="DIP" id="DIP-57653N"/>
<dbReference type="IntAct" id="P08543">
    <property type="interactions" value="5"/>
</dbReference>
<dbReference type="MINT" id="P08543"/>
<dbReference type="BindingDB" id="P08543"/>
<dbReference type="ChEMBL" id="CHEMBL3840"/>
<dbReference type="DrugCentral" id="P08543"/>
<dbReference type="DNASU" id="2703361"/>
<dbReference type="GeneID" id="2703361"/>
<dbReference type="KEGG" id="vg:2703361"/>
<dbReference type="Reactome" id="R-HSA-5213460">
    <property type="pathway name" value="RIPK1-mediated regulated necrosis"/>
</dbReference>
<dbReference type="Reactome" id="R-HSA-9686347">
    <property type="pathway name" value="Microbial modulation of RIPK1-mediated regulated necrosis"/>
</dbReference>
<dbReference type="Proteomes" id="UP000009294">
    <property type="component" value="Segment"/>
</dbReference>
<dbReference type="Proteomes" id="UP000180652">
    <property type="component" value="Segment"/>
</dbReference>
<dbReference type="GO" id="GO:0005524">
    <property type="term" value="F:ATP binding"/>
    <property type="evidence" value="ECO:0007669"/>
    <property type="project" value="UniProtKB-UniRule"/>
</dbReference>
<dbReference type="GO" id="GO:0004748">
    <property type="term" value="F:ribonucleoside-diphosphate reductase activity, thioredoxin disulfide as acceptor"/>
    <property type="evidence" value="ECO:0007669"/>
    <property type="project" value="UniProtKB-UniRule"/>
</dbReference>
<dbReference type="GO" id="GO:0009263">
    <property type="term" value="P:deoxyribonucleotide biosynthetic process"/>
    <property type="evidence" value="ECO:0007669"/>
    <property type="project" value="InterPro"/>
</dbReference>
<dbReference type="GO" id="GO:0006260">
    <property type="term" value="P:DNA replication"/>
    <property type="evidence" value="ECO:0007669"/>
    <property type="project" value="UniProtKB-KW"/>
</dbReference>
<dbReference type="GO" id="GO:0019046">
    <property type="term" value="P:release from viral latency"/>
    <property type="evidence" value="ECO:0007669"/>
    <property type="project" value="UniProtKB-KW"/>
</dbReference>
<dbReference type="GO" id="GO:0033668">
    <property type="term" value="P:symbiont-mediated suppression of host apoptosis"/>
    <property type="evidence" value="ECO:0007669"/>
    <property type="project" value="UniProtKB-KW"/>
</dbReference>
<dbReference type="FunFam" id="3.20.70.20:FF:000021">
    <property type="entry name" value="Ribonucleoside-diphosphate reductase large subunit"/>
    <property type="match status" value="1"/>
</dbReference>
<dbReference type="Gene3D" id="3.20.70.20">
    <property type="match status" value="1"/>
</dbReference>
<dbReference type="HAMAP" id="MF_04026">
    <property type="entry name" value="HSV_RIR1"/>
    <property type="match status" value="1"/>
</dbReference>
<dbReference type="InterPro" id="IPR034717">
    <property type="entry name" value="HSV_RIR1"/>
</dbReference>
<dbReference type="InterPro" id="IPR013346">
    <property type="entry name" value="NrdE_NrdA_C"/>
</dbReference>
<dbReference type="InterPro" id="IPR000788">
    <property type="entry name" value="RNR_lg_C"/>
</dbReference>
<dbReference type="InterPro" id="IPR013509">
    <property type="entry name" value="RNR_lsu_N"/>
</dbReference>
<dbReference type="InterPro" id="IPR039718">
    <property type="entry name" value="Rrm1"/>
</dbReference>
<dbReference type="NCBIfam" id="TIGR02506">
    <property type="entry name" value="NrdE_NrdA"/>
    <property type="match status" value="1"/>
</dbReference>
<dbReference type="PANTHER" id="PTHR11573">
    <property type="entry name" value="RIBONUCLEOSIDE-DIPHOSPHATE REDUCTASE LARGE CHAIN"/>
    <property type="match status" value="1"/>
</dbReference>
<dbReference type="PANTHER" id="PTHR11573:SF6">
    <property type="entry name" value="RIBONUCLEOSIDE-DIPHOSPHATE REDUCTASE LARGE SUBUNIT"/>
    <property type="match status" value="1"/>
</dbReference>
<dbReference type="Pfam" id="PF02867">
    <property type="entry name" value="Ribonuc_red_lgC"/>
    <property type="match status" value="1"/>
</dbReference>
<dbReference type="Pfam" id="PF00317">
    <property type="entry name" value="Ribonuc_red_lgN"/>
    <property type="match status" value="1"/>
</dbReference>
<dbReference type="PRINTS" id="PR01183">
    <property type="entry name" value="RIBORDTASEM1"/>
</dbReference>
<dbReference type="SUPFAM" id="SSF51998">
    <property type="entry name" value="PFL-like glycyl radical enzymes"/>
    <property type="match status" value="1"/>
</dbReference>
<dbReference type="PROSITE" id="PS00089">
    <property type="entry name" value="RIBORED_LARGE"/>
    <property type="match status" value="1"/>
</dbReference>
<organism>
    <name type="scientific">Human herpesvirus 1 (strain 17)</name>
    <name type="common">HHV-1</name>
    <name type="synonym">Human herpes simplex virus 1</name>
    <dbReference type="NCBI Taxonomy" id="10299"/>
    <lineage>
        <taxon>Viruses</taxon>
        <taxon>Duplodnaviria</taxon>
        <taxon>Heunggongvirae</taxon>
        <taxon>Peploviricota</taxon>
        <taxon>Herviviricetes</taxon>
        <taxon>Herpesvirales</taxon>
        <taxon>Orthoherpesviridae</taxon>
        <taxon>Alphaherpesvirinae</taxon>
        <taxon>Simplexvirus</taxon>
        <taxon>Simplexvirus humanalpha1</taxon>
        <taxon>Human herpesvirus 1</taxon>
    </lineage>
</organism>
<comment type="function">
    <text evidence="1 4 5 6">Ribonucleoside-diphosphate reductase holoenzyme that provides the precursors necessary for viral DNA synthesis (By similarity). Allows virus growth in non-dividing cells, as well as reactivation from latency in infected hosts. Catalyzes the biosynthesis of deoxyribonucleotides from the corresponding ribonucleotides (By similarity). Prevents host necroptosis by targeting host RIPK1 and RIPK3, thereby hampering the formation of necroptotic RIPK1-RIPK3 complexes (PubMed:25674983, PubMed:30050136). Forms hetero-amyloid structures with host proteins RIPK3 or ZBP1 which may prevent RIPK3- and ZBP1-mediated necroptosis (PubMed:33348174). In addition, inhibits extrinsic apoptosis by targeting host CASP8 (PubMed:25674983).</text>
</comment>
<comment type="catalytic activity">
    <reaction evidence="1">
        <text>a 2'-deoxyribonucleoside 5'-diphosphate + [thioredoxin]-disulfide + H2O = a ribonucleoside 5'-diphosphate + [thioredoxin]-dithiol</text>
        <dbReference type="Rhea" id="RHEA:23252"/>
        <dbReference type="Rhea" id="RHEA-COMP:10698"/>
        <dbReference type="Rhea" id="RHEA-COMP:10700"/>
        <dbReference type="ChEBI" id="CHEBI:15377"/>
        <dbReference type="ChEBI" id="CHEBI:29950"/>
        <dbReference type="ChEBI" id="CHEBI:50058"/>
        <dbReference type="ChEBI" id="CHEBI:57930"/>
        <dbReference type="ChEBI" id="CHEBI:73316"/>
        <dbReference type="EC" id="1.17.4.1"/>
    </reaction>
</comment>
<comment type="subunit">
    <text evidence="1 3 4 6">Heterotetramer composed of a homodimer of the large subunit (R1) and a homodimer of the small subunit (R2) (By similarity). Larger multisubunit protein complex are also active, composed of (R1)n(R2)n (By similarity). Self-assembles (via RIP homotypic interaction motif/RHIM) into homomeric fibrillar amyloid structures (PubMed:33348174). Interacts (via RHIM) with human RIPK1 (via RHIM) (PubMed:25674983). Interacts (via RHIM) with human RIPK3 (via RHIM); the interaction leads to heteromeric amyloid assemblies (PubMed:25316792, PubMed:25674983, PubMed:33348174). Interacts (via RHIM) with human ZBP1 (via RHIM); the interaction leads to heteromeric amyloid assemblies (PubMed:33348174). Interacts (via C-terminus) with host CASP8 (PubMed:25674983).</text>
</comment>
<comment type="domain">
    <text evidence="6">The RIP homotypic interaction motif/RHIM drives self-assembly into homomeric amyloid structures and mediates interaction with the RHIM motif of host proteins RIPK3 and ZBP1 to form heteromeric amyloid structures.</text>
</comment>
<comment type="similarity">
    <text evidence="1">Belongs to the ribonucleoside diphosphate reductase large chain family.</text>
</comment>
<reference key="1">
    <citation type="journal article" date="1988" name="J. Gen. Virol.">
        <title>The complete DNA sequence of the long unique region in the genome of herpes simplex virus type 1.</title>
        <authorList>
            <person name="McGeoch D.J."/>
            <person name="Dalrymple M.A."/>
            <person name="Davison A.J."/>
            <person name="Dolan A."/>
            <person name="Frame M.C."/>
            <person name="McNab D."/>
            <person name="Perry L.J."/>
            <person name="Scott J.E."/>
            <person name="Taylor P."/>
        </authorList>
    </citation>
    <scope>NUCLEOTIDE SEQUENCE [LARGE SCALE GENOMIC DNA]</scope>
</reference>
<reference key="2">
    <citation type="journal article" date="1986" name="Proteins">
        <title>Structural features of ribonucleotide reductase.</title>
        <authorList>
            <person name="Nikas I."/>
            <person name="McLauchlan J."/>
            <person name="Davison A.J."/>
            <person name="Taylor W.R."/>
            <person name="Clements J.B."/>
        </authorList>
    </citation>
    <scope>NUCLEOTIDE SEQUENCE [GENOMIC DNA]</scope>
    <source>
        <strain>Isolate pYN1</strain>
    </source>
</reference>
<reference key="3">
    <citation type="journal article" date="2007" name="Microbes Infect.">
        <title>Determination and analysis of the DNA sequence of highly attenuated herpes simplex virus type 1 mutant HF10, a potential oncolytic virus.</title>
        <authorList>
            <person name="Ushijima Y."/>
            <person name="Luo C."/>
            <person name="Goshima F."/>
            <person name="Yamauchi Y."/>
            <person name="Kimura H."/>
            <person name="Nishiyama Y."/>
        </authorList>
    </citation>
    <scope>NUCLEOTIDE SEQUENCE [LARGE SCALE GENOMIC DNA]</scope>
    <source>
        <strain>Nonneuroinvasive mutant HF10</strain>
    </source>
</reference>
<reference key="4">
    <citation type="submission" date="2008-12" db="EMBL/GenBank/DDBJ databases">
        <title>Herpes simplex virus type 1 bacterial artificial chromosome.</title>
        <authorList>
            <person name="Cunningham C."/>
            <person name="Davison A.J."/>
        </authorList>
    </citation>
    <scope>NUCLEOTIDE SEQUENCE [LARGE SCALE GENOMIC DNA]</scope>
    <source>
        <strain>17 syn+</strain>
    </source>
</reference>
<reference key="5">
    <citation type="journal article" date="2009" name="Trends Biochem. Sci.">
        <title>Tinkering with a viral ribonucleotide reductase.</title>
        <authorList>
            <person name="Lembo D."/>
            <person name="Brune W."/>
        </authorList>
    </citation>
    <scope>REVIEW</scope>
</reference>
<reference key="6">
    <citation type="journal article" date="2014" name="Proc. Natl. Acad. Sci. U.S.A.">
        <title>Direct activation of RIP3/MLKL-dependent necrosis by herpes simplex virus 1 (HSV-1) protein ICP6 triggers host antiviral defense.</title>
        <authorList>
            <person name="Wang X."/>
            <person name="Li Y."/>
            <person name="Liu S."/>
            <person name="Yu X."/>
            <person name="Li L."/>
            <person name="Shi C."/>
            <person name="He W."/>
            <person name="Li J."/>
            <person name="Xu L."/>
            <person name="Hu Z."/>
            <person name="Yu L."/>
            <person name="Yang Z."/>
            <person name="Chen Q."/>
            <person name="Ge L."/>
            <person name="Zhang Z."/>
            <person name="Zhou B."/>
            <person name="Jiang X."/>
            <person name="Chen S."/>
            <person name="He S."/>
        </authorList>
    </citation>
    <scope>INTERACTION WITH HOST RIPK3</scope>
    <scope>MUTAGENESIS OF 73-VAL--GLY-76</scope>
</reference>
<reference key="7">
    <citation type="journal article" date="2015" name="Cell Host Microbe">
        <title>Herpes simplex virus suppresses necroptosis in human cells.</title>
        <authorList>
            <person name="Guo H."/>
            <person name="Omoto S."/>
            <person name="Harris P.A."/>
            <person name="Finger J.N."/>
            <person name="Bertin J."/>
            <person name="Gough P.J."/>
            <person name="Kaiser W.J."/>
            <person name="Mocarski E.S."/>
        </authorList>
    </citation>
    <scope>FUNCTION</scope>
    <scope>INTERACTION WITH HOST RIPK1; RIPK3 AND CASP8</scope>
    <scope>MUTAGENESIS OF 73-VAL--GLY-76</scope>
</reference>
<reference key="8">
    <citation type="journal article" date="2018" name="Cell Death Dis.">
        <title>Species-independent contribution of ZBP1/DAI/DLM-1-triggered necroptosis in host defense against HSV1.</title>
        <authorList>
            <person name="Guo H."/>
            <person name="Gilley R.P."/>
            <person name="Fisher A."/>
            <person name="Lane R."/>
            <person name="Landsteiner V.J."/>
            <person name="Ragan K.B."/>
            <person name="Dovey C.M."/>
            <person name="Carette J.E."/>
            <person name="Upton J.W."/>
            <person name="Mocarski E.S."/>
            <person name="Kaiser W.J."/>
        </authorList>
    </citation>
    <scope>FUNCTION</scope>
    <scope>MUTAGENESIS OF 73-VAL--GLY-76</scope>
</reference>
<reference key="9">
    <citation type="journal article" date="2021" name="Biophys. Chem.">
        <title>Herpes simplex virus encoded ICP6 protein forms functional amyloid assemblies with necroptosis-associated host proteins.</title>
        <authorList>
            <person name="Shanmugam N."/>
            <person name="Baker M.O.D.G."/>
            <person name="Sanz-Hernandez M."/>
            <person name="Sierecki E."/>
            <person name="Gambin Y."/>
            <person name="Steain M."/>
            <person name="Pham C.L.L."/>
            <person name="Sunde M."/>
        </authorList>
    </citation>
    <scope>FUNCTION</scope>
    <scope>INTERACTION WITH HOST RIPK3 AND HOST ZBP1</scope>
    <scope>DOMAIN</scope>
    <scope>MUTAGENESIS OF 73-VAL--GLY-76</scope>
</reference>
<gene>
    <name evidence="1" type="primary">RIR1</name>
    <name evidence="7" type="synonym">ICP6</name>
    <name type="ordered locus">UL39</name>
</gene>
<name>RIR1_HHV11</name>
<feature type="chain" id="PRO_0000187236" description="Ribonucleoside-diphosphate reductase large subunit">
    <location>
        <begin position="1"/>
        <end position="1137"/>
    </location>
</feature>
<feature type="region of interest" description="Disordered" evidence="2">
    <location>
        <begin position="1"/>
        <end position="32"/>
    </location>
</feature>
<feature type="region of interest" description="Disordered" evidence="2">
    <location>
        <begin position="124"/>
        <end position="159"/>
    </location>
</feature>
<feature type="region of interest" description="Disordered" evidence="2">
    <location>
        <begin position="173"/>
        <end position="315"/>
    </location>
</feature>
<feature type="short sequence motif" description="RIP homotypic interaction motif (RHIM)" evidence="3">
    <location>
        <begin position="64"/>
        <end position="84"/>
    </location>
</feature>
<feature type="compositionally biased region" description="Polar residues" evidence="2">
    <location>
        <begin position="131"/>
        <end position="141"/>
    </location>
</feature>
<feature type="compositionally biased region" description="Acidic residues" evidence="2">
    <location>
        <begin position="196"/>
        <end position="206"/>
    </location>
</feature>
<feature type="compositionally biased region" description="Low complexity" evidence="2">
    <location>
        <begin position="281"/>
        <end position="290"/>
    </location>
</feature>
<feature type="compositionally biased region" description="Basic and acidic residues" evidence="2">
    <location>
        <begin position="291"/>
        <end position="304"/>
    </location>
</feature>
<feature type="active site" description="Proton acceptor" evidence="1">
    <location>
        <position position="791"/>
    </location>
</feature>
<feature type="active site" description="Cysteine radical intermediate" evidence="1">
    <location>
        <position position="793"/>
    </location>
</feature>
<feature type="active site" description="Proton acceptor" evidence="1">
    <location>
        <position position="795"/>
    </location>
</feature>
<feature type="binding site" evidence="1">
    <location>
        <position position="566"/>
    </location>
    <ligand>
        <name>substrate</name>
    </ligand>
</feature>
<feature type="binding site" evidence="1">
    <location>
        <begin position="581"/>
        <end position="582"/>
    </location>
    <ligand>
        <name>substrate</name>
    </ligand>
</feature>
<feature type="binding site" evidence="1">
    <location>
        <position position="612"/>
    </location>
    <ligand>
        <name>substrate</name>
    </ligand>
</feature>
<feature type="binding site" evidence="1">
    <location>
        <begin position="791"/>
        <end position="795"/>
    </location>
    <ligand>
        <name>substrate</name>
    </ligand>
</feature>
<feature type="binding site" evidence="1">
    <location>
        <begin position="968"/>
        <end position="972"/>
    </location>
    <ligand>
        <name>substrate</name>
    </ligand>
</feature>
<feature type="site" description="Important for hydrogen atom transfer" evidence="1">
    <location>
        <position position="582"/>
    </location>
</feature>
<feature type="site" description="Important for hydrogen atom transfer" evidence="1">
    <location>
        <position position="808"/>
    </location>
</feature>
<feature type="site" description="Important for electron transfer" evidence="1">
    <location>
        <position position="1111"/>
    </location>
</feature>
<feature type="site" description="Important for electron transfer" evidence="1">
    <location>
        <position position="1112"/>
    </location>
</feature>
<feature type="site" description="Interacts with thioredoxin/glutaredoxin" evidence="1">
    <location>
        <position position="1132"/>
    </location>
</feature>
<feature type="site" description="Interacts with thioredoxin/glutaredoxin" evidence="1">
    <location>
        <position position="1135"/>
    </location>
</feature>
<feature type="disulfide bond" description="Redox-active" evidence="1">
    <location>
        <begin position="582"/>
        <end position="808"/>
    </location>
</feature>
<feature type="sequence variant" description="In strain: Nonneuroinvasive mutant HF10, 17 syn+ and Isolate pYN1.">
    <original>N</original>
    <variation>S</variation>
    <location>
        <position position="70"/>
    </location>
</feature>
<feature type="sequence variant" description="In strain: Nonneuroinvasive mutant HF10.">
    <original>M</original>
    <variation>T</variation>
    <location>
        <position position="1133"/>
    </location>
</feature>
<feature type="mutagenesis site" description="No homomeric amyloid formation. Abolished interaction with human RIPK3. Decreased interaction with human ZBP1. Loss of ability to prevent necroptosis." evidence="3 4 5 6">
    <original>VQCG</original>
    <variation>AAAA</variation>
    <location>
        <begin position="73"/>
        <end position="76"/>
    </location>
</feature>
<feature type="sequence conflict" description="In Ref. 2; AAA45805." evidence="8" ref="2">
    <original>A</original>
    <variation>P</variation>
    <location>
        <position position="1034"/>
    </location>
</feature>
<organismHost>
    <name type="scientific">Homo sapiens</name>
    <name type="common">Human</name>
    <dbReference type="NCBI Taxonomy" id="9606"/>
</organismHost>
<protein>
    <recommendedName>
        <fullName evidence="1">Ribonucleoside-diphosphate reductase large subunit</fullName>
        <shortName evidence="1">R1</shortName>
        <ecNumber evidence="1">1.17.4.1</ecNumber>
    </recommendedName>
    <alternativeName>
        <fullName evidence="1">Ribonucleotide reductase large subunit</fullName>
    </alternativeName>
</protein>
<accession>P08543</accession>
<accession>B9VQG7</accession>
<accession>Q09I94</accession>
<keyword id="KW-0067">ATP-binding</keyword>
<keyword id="KW-1015">Disulfide bond</keyword>
<keyword id="KW-0235">DNA replication</keyword>
<keyword id="KW-0244">Early protein</keyword>
<keyword id="KW-0945">Host-virus interaction</keyword>
<keyword id="KW-1085">Inhibition of host caspases by virus</keyword>
<keyword id="KW-1119">Modulation of host cell apoptosis by virus</keyword>
<keyword id="KW-0547">Nucleotide-binding</keyword>
<keyword id="KW-0560">Oxidoreductase</keyword>
<keyword id="KW-1185">Reference proteome</keyword>
<keyword id="KW-1251">Viral latency</keyword>
<keyword id="KW-1272">Viral reactivation from latency</keyword>